<sequence length="234" mass="26071">MEFTPPLQQGILLRRYKRFLADVQLSDGSEITLHCPNTGSMRNCLYPGETVWFSTSDNPKRKYAHTWELMTTPDAGLIGIHSGQANTLAEEAINKGIIKELTGYDSLSREVKYGDENSRIDILLQGAQKPACYIEVKSCTLLEDGQGYFPDAVSLRGQKHLRELMHMVSQGHRAVLLFVVQHSDIFSVAPAAHIDPEYAKLLKKAVLAGVEVLAYRCEMSPTEIHLAQACVVRV</sequence>
<name>SFSA_SHEB2</name>
<proteinExistence type="inferred from homology"/>
<feature type="chain" id="PRO_1000196977" description="Sugar fermentation stimulation protein homolog">
    <location>
        <begin position="1"/>
        <end position="234"/>
    </location>
</feature>
<protein>
    <recommendedName>
        <fullName evidence="1">Sugar fermentation stimulation protein homolog</fullName>
    </recommendedName>
</protein>
<reference key="1">
    <citation type="submission" date="2008-12" db="EMBL/GenBank/DDBJ databases">
        <title>Complete sequence of chromosome of Shewanella baltica OS223.</title>
        <authorList>
            <consortium name="US DOE Joint Genome Institute"/>
            <person name="Lucas S."/>
            <person name="Copeland A."/>
            <person name="Lapidus A."/>
            <person name="Glavina del Rio T."/>
            <person name="Dalin E."/>
            <person name="Tice H."/>
            <person name="Bruce D."/>
            <person name="Goodwin L."/>
            <person name="Pitluck S."/>
            <person name="Chertkov O."/>
            <person name="Meincke L."/>
            <person name="Brettin T."/>
            <person name="Detter J.C."/>
            <person name="Han C."/>
            <person name="Kuske C.R."/>
            <person name="Larimer F."/>
            <person name="Land M."/>
            <person name="Hauser L."/>
            <person name="Kyrpides N."/>
            <person name="Ovchinnikova G."/>
            <person name="Brettar I."/>
            <person name="Rodrigues J."/>
            <person name="Konstantinidis K."/>
            <person name="Tiedje J."/>
        </authorList>
    </citation>
    <scope>NUCLEOTIDE SEQUENCE [LARGE SCALE GENOMIC DNA]</scope>
    <source>
        <strain>OS223</strain>
    </source>
</reference>
<accession>B8EDX9</accession>
<evidence type="ECO:0000255" key="1">
    <source>
        <dbReference type="HAMAP-Rule" id="MF_00095"/>
    </source>
</evidence>
<comment type="similarity">
    <text evidence="1">Belongs to the SfsA family.</text>
</comment>
<dbReference type="EMBL" id="CP001252">
    <property type="protein sequence ID" value="ACK45391.1"/>
    <property type="molecule type" value="Genomic_DNA"/>
</dbReference>
<dbReference type="RefSeq" id="WP_006085987.1">
    <property type="nucleotide sequence ID" value="NC_011663.1"/>
</dbReference>
<dbReference type="SMR" id="B8EDX9"/>
<dbReference type="KEGG" id="sbp:Sbal223_0873"/>
<dbReference type="HOGENOM" id="CLU_052299_2_0_6"/>
<dbReference type="Proteomes" id="UP000002507">
    <property type="component" value="Chromosome"/>
</dbReference>
<dbReference type="GO" id="GO:0003677">
    <property type="term" value="F:DNA binding"/>
    <property type="evidence" value="ECO:0007669"/>
    <property type="project" value="InterPro"/>
</dbReference>
<dbReference type="CDD" id="cd22359">
    <property type="entry name" value="SfsA-like_bacterial"/>
    <property type="match status" value="1"/>
</dbReference>
<dbReference type="FunFam" id="2.40.50.580:FF:000001">
    <property type="entry name" value="Sugar fermentation stimulation protein A"/>
    <property type="match status" value="1"/>
</dbReference>
<dbReference type="FunFam" id="3.40.1350.60:FF:000001">
    <property type="entry name" value="Sugar fermentation stimulation protein A"/>
    <property type="match status" value="1"/>
</dbReference>
<dbReference type="Gene3D" id="2.40.50.580">
    <property type="match status" value="1"/>
</dbReference>
<dbReference type="Gene3D" id="3.40.1350.60">
    <property type="match status" value="1"/>
</dbReference>
<dbReference type="HAMAP" id="MF_00095">
    <property type="entry name" value="SfsA"/>
    <property type="match status" value="1"/>
</dbReference>
<dbReference type="InterPro" id="IPR005224">
    <property type="entry name" value="SfsA"/>
</dbReference>
<dbReference type="InterPro" id="IPR040452">
    <property type="entry name" value="SfsA_C"/>
</dbReference>
<dbReference type="InterPro" id="IPR041465">
    <property type="entry name" value="SfsA_N"/>
</dbReference>
<dbReference type="NCBIfam" id="TIGR00230">
    <property type="entry name" value="sfsA"/>
    <property type="match status" value="1"/>
</dbReference>
<dbReference type="PANTHER" id="PTHR30545">
    <property type="entry name" value="SUGAR FERMENTATION STIMULATION PROTEIN A"/>
    <property type="match status" value="1"/>
</dbReference>
<dbReference type="PANTHER" id="PTHR30545:SF2">
    <property type="entry name" value="SUGAR FERMENTATION STIMULATION PROTEIN A"/>
    <property type="match status" value="1"/>
</dbReference>
<dbReference type="Pfam" id="PF03749">
    <property type="entry name" value="SfsA"/>
    <property type="match status" value="1"/>
</dbReference>
<dbReference type="Pfam" id="PF17746">
    <property type="entry name" value="SfsA_N"/>
    <property type="match status" value="1"/>
</dbReference>
<gene>
    <name evidence="1" type="primary">sfsA</name>
    <name type="ordered locus">Sbal223_0873</name>
</gene>
<organism>
    <name type="scientific">Shewanella baltica (strain OS223)</name>
    <dbReference type="NCBI Taxonomy" id="407976"/>
    <lineage>
        <taxon>Bacteria</taxon>
        <taxon>Pseudomonadati</taxon>
        <taxon>Pseudomonadota</taxon>
        <taxon>Gammaproteobacteria</taxon>
        <taxon>Alteromonadales</taxon>
        <taxon>Shewanellaceae</taxon>
        <taxon>Shewanella</taxon>
    </lineage>
</organism>